<reference key="1">
    <citation type="journal article" date="2009" name="PLoS Genet.">
        <title>Organised genome dynamics in the Escherichia coli species results in highly diverse adaptive paths.</title>
        <authorList>
            <person name="Touchon M."/>
            <person name="Hoede C."/>
            <person name="Tenaillon O."/>
            <person name="Barbe V."/>
            <person name="Baeriswyl S."/>
            <person name="Bidet P."/>
            <person name="Bingen E."/>
            <person name="Bonacorsi S."/>
            <person name="Bouchier C."/>
            <person name="Bouvet O."/>
            <person name="Calteau A."/>
            <person name="Chiapello H."/>
            <person name="Clermont O."/>
            <person name="Cruveiller S."/>
            <person name="Danchin A."/>
            <person name="Diard M."/>
            <person name="Dossat C."/>
            <person name="Karoui M.E."/>
            <person name="Frapy E."/>
            <person name="Garry L."/>
            <person name="Ghigo J.M."/>
            <person name="Gilles A.M."/>
            <person name="Johnson J."/>
            <person name="Le Bouguenec C."/>
            <person name="Lescat M."/>
            <person name="Mangenot S."/>
            <person name="Martinez-Jehanne V."/>
            <person name="Matic I."/>
            <person name="Nassif X."/>
            <person name="Oztas S."/>
            <person name="Petit M.A."/>
            <person name="Pichon C."/>
            <person name="Rouy Z."/>
            <person name="Ruf C.S."/>
            <person name="Schneider D."/>
            <person name="Tourret J."/>
            <person name="Vacherie B."/>
            <person name="Vallenet D."/>
            <person name="Medigue C."/>
            <person name="Rocha E.P.C."/>
            <person name="Denamur E."/>
        </authorList>
    </citation>
    <scope>NUCLEOTIDE SEQUENCE [LARGE SCALE GENOMIC DNA]</scope>
    <source>
        <strain>S88 / ExPEC</strain>
    </source>
</reference>
<evidence type="ECO:0000255" key="1">
    <source>
        <dbReference type="HAMAP-Rule" id="MF_00686"/>
    </source>
</evidence>
<protein>
    <recommendedName>
        <fullName evidence="1">Probable Fe(2+)-trafficking protein</fullName>
    </recommendedName>
</protein>
<keyword id="KW-0408">Iron</keyword>
<keyword id="KW-1185">Reference proteome</keyword>
<proteinExistence type="inferred from homology"/>
<sequence length="91" mass="10953">MSRTIFCTFLQREAEGQDFQLYPGELGKRIYNEISKEAWAQWQHKQTMLINEKKLNMMNAEHRKLLEQEMVNFLFEGKEVHIEGYTPEDKK</sequence>
<gene>
    <name evidence="1" type="primary">yggX</name>
    <name type="ordered locus">ECS88_3245</name>
</gene>
<organism>
    <name type="scientific">Escherichia coli O45:K1 (strain S88 / ExPEC)</name>
    <dbReference type="NCBI Taxonomy" id="585035"/>
    <lineage>
        <taxon>Bacteria</taxon>
        <taxon>Pseudomonadati</taxon>
        <taxon>Pseudomonadota</taxon>
        <taxon>Gammaproteobacteria</taxon>
        <taxon>Enterobacterales</taxon>
        <taxon>Enterobacteriaceae</taxon>
        <taxon>Escherichia</taxon>
    </lineage>
</organism>
<comment type="function">
    <text evidence="1">Could be a mediator in iron transactions between iron acquisition and iron-requiring processes, such as synthesis and/or repair of Fe-S clusters in biosynthetic enzymes.</text>
</comment>
<comment type="subunit">
    <text evidence="1">Monomer.</text>
</comment>
<comment type="similarity">
    <text evidence="1">Belongs to the Fe(2+)-trafficking protein family.</text>
</comment>
<dbReference type="EMBL" id="CU928161">
    <property type="protein sequence ID" value="CAR04479.1"/>
    <property type="molecule type" value="Genomic_DNA"/>
</dbReference>
<dbReference type="RefSeq" id="WP_000091700.1">
    <property type="nucleotide sequence ID" value="NC_011742.1"/>
</dbReference>
<dbReference type="SMR" id="B7MN09"/>
<dbReference type="KEGG" id="ecz:ECS88_3245"/>
<dbReference type="HOGENOM" id="CLU_170994_0_0_6"/>
<dbReference type="Proteomes" id="UP000000747">
    <property type="component" value="Chromosome"/>
</dbReference>
<dbReference type="GO" id="GO:0005829">
    <property type="term" value="C:cytosol"/>
    <property type="evidence" value="ECO:0007669"/>
    <property type="project" value="TreeGrafter"/>
</dbReference>
<dbReference type="GO" id="GO:0005506">
    <property type="term" value="F:iron ion binding"/>
    <property type="evidence" value="ECO:0007669"/>
    <property type="project" value="UniProtKB-UniRule"/>
</dbReference>
<dbReference type="GO" id="GO:0034599">
    <property type="term" value="P:cellular response to oxidative stress"/>
    <property type="evidence" value="ECO:0007669"/>
    <property type="project" value="TreeGrafter"/>
</dbReference>
<dbReference type="FunFam" id="1.10.3880.10:FF:000001">
    <property type="entry name" value="Probable Fe(2+)-trafficking protein"/>
    <property type="match status" value="1"/>
</dbReference>
<dbReference type="Gene3D" id="1.10.3880.10">
    <property type="entry name" value="Fe(II) trafficking protein YggX"/>
    <property type="match status" value="1"/>
</dbReference>
<dbReference type="HAMAP" id="MF_00686">
    <property type="entry name" value="Fe_traffic_YggX"/>
    <property type="match status" value="1"/>
</dbReference>
<dbReference type="InterPro" id="IPR007457">
    <property type="entry name" value="Fe_traffick_prot_YggX"/>
</dbReference>
<dbReference type="InterPro" id="IPR036766">
    <property type="entry name" value="Fe_traffick_prot_YggX_sf"/>
</dbReference>
<dbReference type="NCBIfam" id="NF003817">
    <property type="entry name" value="PRK05408.1"/>
    <property type="match status" value="1"/>
</dbReference>
<dbReference type="PANTHER" id="PTHR36965">
    <property type="entry name" value="FE(2+)-TRAFFICKING PROTEIN-RELATED"/>
    <property type="match status" value="1"/>
</dbReference>
<dbReference type="PANTHER" id="PTHR36965:SF1">
    <property type="entry name" value="FE(2+)-TRAFFICKING PROTEIN-RELATED"/>
    <property type="match status" value="1"/>
</dbReference>
<dbReference type="Pfam" id="PF04362">
    <property type="entry name" value="Iron_traffic"/>
    <property type="match status" value="1"/>
</dbReference>
<dbReference type="PIRSF" id="PIRSF029827">
    <property type="entry name" value="Fe_traffic_YggX"/>
    <property type="match status" value="1"/>
</dbReference>
<dbReference type="SUPFAM" id="SSF111148">
    <property type="entry name" value="YggX-like"/>
    <property type="match status" value="1"/>
</dbReference>
<feature type="chain" id="PRO_1000131839" description="Probable Fe(2+)-trafficking protein">
    <location>
        <begin position="1"/>
        <end position="91"/>
    </location>
</feature>
<name>FETP_ECO45</name>
<accession>B7MN09</accession>